<gene>
    <name evidence="1" type="primary">yeaL</name>
    <name type="ordered locus">ECSP_2361</name>
</gene>
<organism>
    <name type="scientific">Escherichia coli O157:H7 (strain TW14359 / EHEC)</name>
    <dbReference type="NCBI Taxonomy" id="544404"/>
    <lineage>
        <taxon>Bacteria</taxon>
        <taxon>Pseudomonadati</taxon>
        <taxon>Pseudomonadota</taxon>
        <taxon>Gammaproteobacteria</taxon>
        <taxon>Enterobacterales</taxon>
        <taxon>Enterobacteriaceae</taxon>
        <taxon>Escherichia</taxon>
    </lineage>
</organism>
<dbReference type="EMBL" id="CP001368">
    <property type="protein sequence ID" value="ACT72172.1"/>
    <property type="molecule type" value="Genomic_DNA"/>
</dbReference>
<dbReference type="RefSeq" id="WP_000460708.1">
    <property type="nucleotide sequence ID" value="NC_013008.1"/>
</dbReference>
<dbReference type="KEGG" id="etw:ECSP_2361"/>
<dbReference type="HOGENOM" id="CLU_125889_0_0_6"/>
<dbReference type="GO" id="GO:0005886">
    <property type="term" value="C:plasma membrane"/>
    <property type="evidence" value="ECO:0007669"/>
    <property type="project" value="UniProtKB-SubCell"/>
</dbReference>
<dbReference type="HAMAP" id="MF_01874">
    <property type="entry name" value="UPF0756"/>
    <property type="match status" value="1"/>
</dbReference>
<dbReference type="InterPro" id="IPR007382">
    <property type="entry name" value="UPF0756_TM"/>
</dbReference>
<dbReference type="PANTHER" id="PTHR38452">
    <property type="entry name" value="UPF0756 MEMBRANE PROTEIN YEAL"/>
    <property type="match status" value="1"/>
</dbReference>
<dbReference type="PANTHER" id="PTHR38452:SF1">
    <property type="entry name" value="UPF0756 MEMBRANE PROTEIN YEAL"/>
    <property type="match status" value="1"/>
</dbReference>
<dbReference type="Pfam" id="PF04284">
    <property type="entry name" value="DUF441"/>
    <property type="match status" value="1"/>
</dbReference>
<accession>C6UX49</accession>
<sequence>MFDVTLLILLGLAALGFISHNTTVAVSILVLIIVRVTPLSTFFPWIEKQGLSIGIIILTIGVMAPIASGTLPPSTLIHSFLNWKSLVAIAVGVIVSWLGGRGVTLMGSQPQLVAGLLVGTVLGVALFRGVPVGPLIATGLVSLIVGKQ</sequence>
<keyword id="KW-1003">Cell membrane</keyword>
<keyword id="KW-0472">Membrane</keyword>
<keyword id="KW-0812">Transmembrane</keyword>
<keyword id="KW-1133">Transmembrane helix</keyword>
<proteinExistence type="inferred from homology"/>
<feature type="chain" id="PRO_0000388866" description="UPF0756 membrane protein YeaL">
    <location>
        <begin position="1"/>
        <end position="148"/>
    </location>
</feature>
<feature type="transmembrane region" description="Helical" evidence="1">
    <location>
        <begin position="14"/>
        <end position="34"/>
    </location>
</feature>
<feature type="transmembrane region" description="Helical" evidence="1">
    <location>
        <begin position="51"/>
        <end position="71"/>
    </location>
</feature>
<feature type="transmembrane region" description="Helical" evidence="1">
    <location>
        <begin position="86"/>
        <end position="106"/>
    </location>
</feature>
<feature type="transmembrane region" description="Helical" evidence="1">
    <location>
        <begin position="112"/>
        <end position="132"/>
    </location>
</feature>
<reference key="1">
    <citation type="journal article" date="2009" name="Infect. Immun.">
        <title>Analysis of the genome of the Escherichia coli O157:H7 2006 spinach-associated outbreak isolate indicates candidate genes that may enhance virulence.</title>
        <authorList>
            <person name="Kulasekara B.R."/>
            <person name="Jacobs M."/>
            <person name="Zhou Y."/>
            <person name="Wu Z."/>
            <person name="Sims E."/>
            <person name="Saenphimmachak C."/>
            <person name="Rohmer L."/>
            <person name="Ritchie J.M."/>
            <person name="Radey M."/>
            <person name="McKevitt M."/>
            <person name="Freeman T.L."/>
            <person name="Hayden H."/>
            <person name="Haugen E."/>
            <person name="Gillett W."/>
            <person name="Fong C."/>
            <person name="Chang J."/>
            <person name="Beskhlebnaya V."/>
            <person name="Waldor M.K."/>
            <person name="Samadpour M."/>
            <person name="Whittam T.S."/>
            <person name="Kaul R."/>
            <person name="Brittnacher M."/>
            <person name="Miller S.I."/>
        </authorList>
    </citation>
    <scope>NUCLEOTIDE SEQUENCE [LARGE SCALE GENOMIC DNA]</scope>
    <source>
        <strain>TW14359 / EHEC</strain>
    </source>
</reference>
<comment type="subcellular location">
    <subcellularLocation>
        <location evidence="1">Cell membrane</location>
        <topology evidence="1">Multi-pass membrane protein</topology>
    </subcellularLocation>
</comment>
<comment type="similarity">
    <text evidence="1">Belongs to the UPF0756 family.</text>
</comment>
<evidence type="ECO:0000255" key="1">
    <source>
        <dbReference type="HAMAP-Rule" id="MF_01874"/>
    </source>
</evidence>
<protein>
    <recommendedName>
        <fullName evidence="1">UPF0756 membrane protein YeaL</fullName>
    </recommendedName>
</protein>
<name>YEAL_ECO5T</name>